<reference key="1">
    <citation type="submission" date="1996-10" db="EMBL/GenBank/DDBJ databases">
        <authorList>
            <person name="Calcutt M.J."/>
            <person name="Lewis M.S."/>
            <person name="Eisenstark A."/>
        </authorList>
    </citation>
    <scope>NUCLEOTIDE SEQUENCE [GENOMIC DNA]</scope>
    <source>
        <strain>71</strain>
    </source>
</reference>
<evidence type="ECO:0000250" key="1">
    <source>
        <dbReference type="UniProtKB" id="P0AEZ1"/>
    </source>
</evidence>
<evidence type="ECO:0000305" key="2"/>
<name>METF_PECCC</name>
<proteinExistence type="inferred from homology"/>
<gene>
    <name type="primary">metF</name>
</gene>
<keyword id="KW-0028">Amino-acid biosynthesis</keyword>
<keyword id="KW-0274">FAD</keyword>
<keyword id="KW-0285">Flavoprotein</keyword>
<keyword id="KW-0486">Methionine biosynthesis</keyword>
<keyword id="KW-0520">NAD</keyword>
<keyword id="KW-0560">Oxidoreductase</keyword>
<sequence>MSFFHANQREALNQSLAELQGRINVSFEFFPPRTSDMEETLWSSIDRLSSLKPKFVSVTYGANSGERDRTHSIIKTIKERTGLEAAPHLTCIDASREQLREIAQDYWESGIRHIVALRGDLPQEGGKPDMYAADLVSLLKEVGDFDISVAAYPEVHPEAKSAQADLINLKHKIDAGANRAITQFFFDVESYLRFRDRCVATGIDVEIVPGILPVSNFKQLQKFATMTNVRVPNWMTTMFDGLDNDPETRKMVGASIAMDMVKILSREGVKDFHFYTLNRAELSYAICHTLGVRPDVAR</sequence>
<comment type="function">
    <text evidence="1">Catalyzes the NADH-dependent reduction of 5,10-methylenetetrahydrofolate to 5-methyltetrahydrofolate. Is required to provide the methyl group necessary for methionine synthetase to convert homocysteine to methionine; the methyl group is given by 5-methyltetrahydrofolate.</text>
</comment>
<comment type="catalytic activity">
    <reaction evidence="1">
        <text>(6S)-5-methyl-5,6,7,8-tetrahydrofolate + NAD(+) = (6R)-5,10-methylene-5,6,7,8-tetrahydrofolate + NADH + H(+)</text>
        <dbReference type="Rhea" id="RHEA:19821"/>
        <dbReference type="ChEBI" id="CHEBI:15378"/>
        <dbReference type="ChEBI" id="CHEBI:15636"/>
        <dbReference type="ChEBI" id="CHEBI:18608"/>
        <dbReference type="ChEBI" id="CHEBI:57540"/>
        <dbReference type="ChEBI" id="CHEBI:57945"/>
        <dbReference type="EC" id="1.5.1.54"/>
    </reaction>
    <physiologicalReaction direction="right-to-left" evidence="1">
        <dbReference type="Rhea" id="RHEA:19823"/>
    </physiologicalReaction>
</comment>
<comment type="cofactor">
    <cofactor evidence="1">
        <name>FAD</name>
        <dbReference type="ChEBI" id="CHEBI:57692"/>
    </cofactor>
</comment>
<comment type="pathway">
    <text>One-carbon metabolism; tetrahydrofolate interconversion.</text>
</comment>
<comment type="pathway">
    <text evidence="1">Amino-acid biosynthesis; L-methionine biosynthesis via de novo pathway.</text>
</comment>
<comment type="similarity">
    <text evidence="2">Belongs to the methylenetetrahydrofolate reductase family.</text>
</comment>
<accession>P71319</accession>
<feature type="chain" id="PRO_0000190262" description="5,10-methylenetetrahydrofolate reductase">
    <location>
        <begin position="1"/>
        <end position="298"/>
    </location>
</feature>
<feature type="active site" description="Proton donor/acceptor" evidence="1">
    <location>
        <position position="28"/>
    </location>
</feature>
<feature type="binding site" evidence="1">
    <location>
        <position position="59"/>
    </location>
    <ligand>
        <name>NADH</name>
        <dbReference type="ChEBI" id="CHEBI:57945"/>
    </ligand>
</feature>
<feature type="binding site" evidence="1">
    <location>
        <position position="60"/>
    </location>
    <ligand>
        <name>FAD</name>
        <dbReference type="ChEBI" id="CHEBI:57692"/>
    </ligand>
</feature>
<feature type="binding site" evidence="1">
    <location>
        <position position="62"/>
    </location>
    <ligand>
        <name>FAD</name>
        <dbReference type="ChEBI" id="CHEBI:57692"/>
    </ligand>
</feature>
<feature type="binding site" evidence="1">
    <location>
        <position position="88"/>
    </location>
    <ligand>
        <name>FAD</name>
        <dbReference type="ChEBI" id="CHEBI:57692"/>
    </ligand>
</feature>
<feature type="binding site" evidence="1">
    <location>
        <position position="118"/>
    </location>
    <ligand>
        <name>FAD</name>
        <dbReference type="ChEBI" id="CHEBI:57692"/>
    </ligand>
</feature>
<feature type="binding site" evidence="1">
    <location>
        <position position="119"/>
    </location>
    <ligand>
        <name>FAD</name>
        <dbReference type="ChEBI" id="CHEBI:57692"/>
    </ligand>
</feature>
<feature type="binding site" evidence="1">
    <location>
        <position position="120"/>
    </location>
    <ligand>
        <name>(6S)-5-methyl-5,6,7,8-tetrahydrofolate</name>
        <dbReference type="ChEBI" id="CHEBI:18608"/>
    </ligand>
</feature>
<feature type="binding site" evidence="1">
    <location>
        <position position="120"/>
    </location>
    <ligand>
        <name>FAD</name>
        <dbReference type="ChEBI" id="CHEBI:57692"/>
    </ligand>
</feature>
<feature type="binding site" evidence="1">
    <location>
        <position position="132"/>
    </location>
    <ligand>
        <name>FAD</name>
        <dbReference type="ChEBI" id="CHEBI:57692"/>
    </ligand>
</feature>
<feature type="binding site" evidence="1">
    <location>
        <position position="152"/>
    </location>
    <ligand>
        <name>FAD</name>
        <dbReference type="ChEBI" id="CHEBI:57692"/>
    </ligand>
</feature>
<feature type="binding site" evidence="1">
    <location>
        <position position="156"/>
    </location>
    <ligand>
        <name>FAD</name>
        <dbReference type="ChEBI" id="CHEBI:57692"/>
    </ligand>
</feature>
<feature type="binding site" evidence="1">
    <location>
        <position position="159"/>
    </location>
    <ligand>
        <name>FAD</name>
        <dbReference type="ChEBI" id="CHEBI:57692"/>
    </ligand>
</feature>
<feature type="binding site" evidence="1">
    <location>
        <position position="165"/>
    </location>
    <ligand>
        <name>FAD</name>
        <dbReference type="ChEBI" id="CHEBI:57692"/>
    </ligand>
</feature>
<feature type="binding site" evidence="1">
    <location>
        <position position="168"/>
    </location>
    <ligand>
        <name>FAD</name>
        <dbReference type="ChEBI" id="CHEBI:57692"/>
    </ligand>
</feature>
<feature type="binding site" evidence="1">
    <location>
        <position position="172"/>
    </location>
    <ligand>
        <name>FAD</name>
        <dbReference type="ChEBI" id="CHEBI:57692"/>
    </ligand>
</feature>
<feature type="binding site" evidence="1">
    <location>
        <position position="183"/>
    </location>
    <ligand>
        <name>(6S)-5-methyl-5,6,7,8-tetrahydrofolate</name>
        <dbReference type="ChEBI" id="CHEBI:18608"/>
    </ligand>
</feature>
<feature type="binding site" evidence="1">
    <location>
        <position position="183"/>
    </location>
    <ligand>
        <name>NADH</name>
        <dbReference type="ChEBI" id="CHEBI:57945"/>
    </ligand>
</feature>
<feature type="binding site" evidence="1">
    <location>
        <position position="219"/>
    </location>
    <ligand>
        <name>(6S)-5-methyl-5,6,7,8-tetrahydrofolate</name>
        <dbReference type="ChEBI" id="CHEBI:18608"/>
    </ligand>
</feature>
<feature type="binding site" evidence="1">
    <location>
        <position position="279"/>
    </location>
    <ligand>
        <name>(6S)-5-methyl-5,6,7,8-tetrahydrofolate</name>
        <dbReference type="ChEBI" id="CHEBI:18608"/>
    </ligand>
</feature>
<dbReference type="EC" id="1.5.1.54" evidence="1"/>
<dbReference type="EMBL" id="U74302">
    <property type="protein sequence ID" value="AAC72242.1"/>
    <property type="molecule type" value="Genomic_DNA"/>
</dbReference>
<dbReference type="SMR" id="P71319"/>
<dbReference type="UniPathway" id="UPA00051"/>
<dbReference type="UniPathway" id="UPA00193"/>
<dbReference type="GO" id="GO:0005829">
    <property type="term" value="C:cytosol"/>
    <property type="evidence" value="ECO:0007669"/>
    <property type="project" value="InterPro"/>
</dbReference>
<dbReference type="GO" id="GO:0071949">
    <property type="term" value="F:FAD binding"/>
    <property type="evidence" value="ECO:0007669"/>
    <property type="project" value="TreeGrafter"/>
</dbReference>
<dbReference type="GO" id="GO:0106312">
    <property type="term" value="F:methylenetetrahydrofolate reductase (NADH) activity"/>
    <property type="evidence" value="ECO:0007669"/>
    <property type="project" value="RHEA"/>
</dbReference>
<dbReference type="GO" id="GO:0009086">
    <property type="term" value="P:methionine biosynthetic process"/>
    <property type="evidence" value="ECO:0007669"/>
    <property type="project" value="UniProtKB-KW"/>
</dbReference>
<dbReference type="GO" id="GO:0035999">
    <property type="term" value="P:tetrahydrofolate interconversion"/>
    <property type="evidence" value="ECO:0007669"/>
    <property type="project" value="UniProtKB-UniPathway"/>
</dbReference>
<dbReference type="CDD" id="cd00537">
    <property type="entry name" value="MTHFR"/>
    <property type="match status" value="1"/>
</dbReference>
<dbReference type="FunFam" id="3.20.20.220:FF:000001">
    <property type="entry name" value="Methylenetetrahydrofolate reductase"/>
    <property type="match status" value="1"/>
</dbReference>
<dbReference type="Gene3D" id="3.20.20.220">
    <property type="match status" value="1"/>
</dbReference>
<dbReference type="InterPro" id="IPR029041">
    <property type="entry name" value="FAD-linked_oxidoreductase-like"/>
</dbReference>
<dbReference type="InterPro" id="IPR003171">
    <property type="entry name" value="Mehydrof_redctse-like"/>
</dbReference>
<dbReference type="InterPro" id="IPR004620">
    <property type="entry name" value="MTHF_reductase_bac"/>
</dbReference>
<dbReference type="NCBIfam" id="TIGR00676">
    <property type="entry name" value="fadh2"/>
    <property type="match status" value="1"/>
</dbReference>
<dbReference type="NCBIfam" id="NF006950">
    <property type="entry name" value="PRK09432.1"/>
    <property type="match status" value="1"/>
</dbReference>
<dbReference type="PANTHER" id="PTHR45754">
    <property type="entry name" value="METHYLENETETRAHYDROFOLATE REDUCTASE"/>
    <property type="match status" value="1"/>
</dbReference>
<dbReference type="PANTHER" id="PTHR45754:SF3">
    <property type="entry name" value="METHYLENETETRAHYDROFOLATE REDUCTASE (NADPH)"/>
    <property type="match status" value="1"/>
</dbReference>
<dbReference type="Pfam" id="PF02219">
    <property type="entry name" value="MTHFR"/>
    <property type="match status" value="1"/>
</dbReference>
<dbReference type="SUPFAM" id="SSF51730">
    <property type="entry name" value="FAD-linked oxidoreductase"/>
    <property type="match status" value="1"/>
</dbReference>
<protein>
    <recommendedName>
        <fullName>5,10-methylenetetrahydrofolate reductase</fullName>
        <ecNumber evidence="1">1.5.1.54</ecNumber>
    </recommendedName>
</protein>
<organism>
    <name type="scientific">Pectobacterium carotovorum subsp. carotovorum</name>
    <name type="common">Erwinia carotovora subsp. carotovora</name>
    <dbReference type="NCBI Taxonomy" id="555"/>
    <lineage>
        <taxon>Bacteria</taxon>
        <taxon>Pseudomonadati</taxon>
        <taxon>Pseudomonadota</taxon>
        <taxon>Gammaproteobacteria</taxon>
        <taxon>Enterobacterales</taxon>
        <taxon>Pectobacteriaceae</taxon>
        <taxon>Pectobacterium</taxon>
    </lineage>
</organism>